<reference key="1">
    <citation type="journal article" date="1995" name="Mutat. Res.">
        <title>dinP, a new gene in Escherichia coli, whose product shows similarities to UmuC and its homologues.</title>
        <authorList>
            <person name="Ohmori H."/>
            <person name="Hatada E."/>
            <person name="Qiao Y."/>
            <person name="Tsuji M."/>
            <person name="Fukuda R."/>
        </authorList>
    </citation>
    <scope>NUCLEOTIDE SEQUENCE [GENOMIC DNA]</scope>
    <source>
        <strain>K12 / W3110 / ATCC 27325 / DSM 5911</strain>
    </source>
</reference>
<reference key="2">
    <citation type="submission" date="1996-02" db="EMBL/GenBank/DDBJ databases">
        <title>Systematic sequencing of the Escherichia coli genome: analysis of the 4.0 - 6.0 min (189,987 - 281,416bp) region.</title>
        <authorList>
            <person name="Takemoto K."/>
            <person name="Mori H."/>
            <person name="Murayama N."/>
            <person name="Kataoka K."/>
            <person name="Yano M."/>
            <person name="Itoh T."/>
            <person name="Yamamoto Y."/>
            <person name="Inokuchi H."/>
            <person name="Miki T."/>
            <person name="Hatada E."/>
            <person name="Fukuda R."/>
            <person name="Ichihara S."/>
            <person name="Mizuno T."/>
            <person name="Makino K."/>
            <person name="Nakata A."/>
            <person name="Yura T."/>
            <person name="Sampei G."/>
            <person name="Mizobuchi K."/>
        </authorList>
    </citation>
    <scope>NUCLEOTIDE SEQUENCE [LARGE SCALE GENOMIC DNA]</scope>
    <source>
        <strain>K12 / W3110 / ATCC 27325 / DSM 5911</strain>
    </source>
</reference>
<reference key="3">
    <citation type="submission" date="1997-01" db="EMBL/GenBank/DDBJ databases">
        <title>Sequence of minutes 4-25 of Escherichia coli.</title>
        <authorList>
            <person name="Chung E."/>
            <person name="Allen E."/>
            <person name="Araujo R."/>
            <person name="Aparicio A.M."/>
            <person name="Davis K."/>
            <person name="Duncan M."/>
            <person name="Federspiel N."/>
            <person name="Hyman R."/>
            <person name="Kalman S."/>
            <person name="Komp C."/>
            <person name="Kurdi O."/>
            <person name="Lew H."/>
            <person name="Lin D."/>
            <person name="Namath A."/>
            <person name="Oefner P."/>
            <person name="Roberts D."/>
            <person name="Schramm S."/>
            <person name="Davis R.W."/>
        </authorList>
    </citation>
    <scope>NUCLEOTIDE SEQUENCE [LARGE SCALE GENOMIC DNA]</scope>
    <source>
        <strain>K12 / MG1655 / ATCC 47076</strain>
    </source>
</reference>
<reference key="4">
    <citation type="journal article" date="1997" name="Science">
        <title>The complete genome sequence of Escherichia coli K-12.</title>
        <authorList>
            <person name="Blattner F.R."/>
            <person name="Plunkett G. III"/>
            <person name="Bloch C.A."/>
            <person name="Perna N.T."/>
            <person name="Burland V."/>
            <person name="Riley M."/>
            <person name="Collado-Vides J."/>
            <person name="Glasner J.D."/>
            <person name="Rode C.K."/>
            <person name="Mayhew G.F."/>
            <person name="Gregor J."/>
            <person name="Davis N.W."/>
            <person name="Kirkpatrick H.A."/>
            <person name="Goeden M.A."/>
            <person name="Rose D.J."/>
            <person name="Mau B."/>
            <person name="Shao Y."/>
        </authorList>
    </citation>
    <scope>NUCLEOTIDE SEQUENCE [LARGE SCALE GENOMIC DNA]</scope>
    <source>
        <strain>K12 / MG1655 / ATCC 47076</strain>
    </source>
</reference>
<reference key="5">
    <citation type="journal article" date="2006" name="Mol. Syst. Biol.">
        <title>Highly accurate genome sequences of Escherichia coli K-12 strains MG1655 and W3110.</title>
        <authorList>
            <person name="Hayashi K."/>
            <person name="Morooka N."/>
            <person name="Yamamoto Y."/>
            <person name="Fujita K."/>
            <person name="Isono K."/>
            <person name="Choi S."/>
            <person name="Ohtsubo E."/>
            <person name="Baba T."/>
            <person name="Wanner B.L."/>
            <person name="Mori H."/>
            <person name="Horiuchi T."/>
        </authorList>
    </citation>
    <scope>NUCLEOTIDE SEQUENCE [LARGE SCALE GENOMIC DNA]</scope>
    <source>
        <strain>K12 / W3110 / ATCC 27325 / DSM 5911</strain>
    </source>
</reference>
<reference key="6">
    <citation type="submission" date="2002-02" db="EMBL/GenBank/DDBJ databases">
        <title>Phylogeny of SOS inducible DNA polymerases of Escherichia coli.</title>
        <authorList>
            <person name="Bjedov I."/>
            <person name="Matic I."/>
            <person name="Denamur E."/>
        </authorList>
    </citation>
    <scope>NUCLEOTIDE SEQUENCE [GENOMIC DNA] OF 7-342</scope>
    <source>
        <strain>ECOR 10A</strain>
        <strain>ECOR 13A</strain>
        <strain>ECOR 17A</strain>
        <strain>ECOR 1A</strain>
        <strain>ECOR 20A</strain>
        <strain>ECOR 23A</strain>
        <strain>ECOR 24A</strain>
        <strain>ECOR 26B1</strain>
        <strain>ECOR 27B1</strain>
        <strain>ECOR 34B1</strain>
        <strain>ECOR 35D</strain>
        <strain>ECOR 37UG</strain>
        <strain>ECOR 45B1</strain>
        <strain>ECOR 46D</strain>
        <strain>ECOR 49D</strain>
        <strain>ECOR 4A</strain>
        <strain>ECOR 50D</strain>
        <strain>ECOR 51B2</strain>
        <strain>ECOR 52B2</strain>
        <strain>ECOR 57B2</strain>
        <strain>ECOR 58B1</strain>
        <strain>ECOR 59B2</strain>
        <strain>ECOR 60B2</strain>
        <strain>ECOR 62B2</strain>
        <strain>ECOR 68B1</strain>
        <strain>ECOR 70B1</strain>
    </source>
</reference>
<reference key="7">
    <citation type="journal article" date="1980" name="Proc. Natl. Acad. Sci. U.S.A.">
        <title>DNA-damaging agents stimulate gene expression at specific loci in Escherichia coli.</title>
        <authorList>
            <person name="Kenyon C.J."/>
            <person name="Walker G.C."/>
        </authorList>
    </citation>
    <scope>CHARACTERIZATION</scope>
</reference>
<reference key="8">
    <citation type="journal article" date="1997" name="Proc. Natl. Acad. Sci. U.S.A.">
        <title>Multiple pathways for SOS-induced mutagenesis in Escherichia coli: an overexpression of dinB/dinP results in strongly enhancing mutagenesis in the absence of any exogenous treatment to damage DNA.</title>
        <authorList>
            <person name="Kim S.-R."/>
            <person name="Maenhaut-Michel G."/>
            <person name="Yamada M."/>
            <person name="Yamamoto Y."/>
            <person name="Matsui K."/>
            <person name="Sofuni T."/>
            <person name="Nohmi T."/>
            <person name="Ohmori H."/>
        </authorList>
    </citation>
    <scope>FUNCTION</scope>
    <source>
        <strain>K12</strain>
    </source>
</reference>
<reference key="9">
    <citation type="journal article" date="1999" name="Mol. Cell">
        <title>The dinB gene encodes a novel E. coli DNA polymerase, DNA pol IV, involved in mutagenesis.</title>
        <authorList>
            <person name="Wagner J."/>
            <person name="Gruz P."/>
            <person name="Kim S.-R."/>
            <person name="Yamada M."/>
            <person name="Matsui K."/>
            <person name="Fuchs R.P.P."/>
            <person name="Nohmi T."/>
        </authorList>
    </citation>
    <scope>FUNCTION</scope>
    <scope>MUTAGENESIS OF ASP-8; ARG-49; ASP-103 AND GLU-104</scope>
    <source>
        <strain>K12</strain>
    </source>
</reference>
<reference key="10">
    <citation type="journal article" date="2000" name="EMBO J.">
        <title>All three SOS-inducible DNA polymerases (Pol II, Pol IV and Pol V) are involved in induced mutagenesis.</title>
        <authorList>
            <person name="Napolitano R."/>
            <person name="Janel-Bintz R."/>
            <person name="Wagner J."/>
            <person name="Fuchs R.P.P."/>
        </authorList>
    </citation>
    <scope>FUNCTION</scope>
    <source>
        <strain>K12 / MG1655 / ATCC 47076</strain>
    </source>
</reference>
<reference key="11">
    <citation type="journal article" date="2000" name="Nature">
        <title>Roles of E. coli DNA polymerases IV and V in lesion-targeted and untargeted SOS mutagenesis.</title>
        <authorList>
            <person name="Tang M."/>
            <person name="Pham P."/>
            <person name="Shen X."/>
            <person name="Taylor J.S."/>
            <person name="O'Donnell M."/>
            <person name="Woodgate R."/>
            <person name="Goodman M.F."/>
        </authorList>
    </citation>
    <scope>FUNCTION</scope>
    <scope>STIMULATION BY BETA SLIDING-CLAMP COMPLEX</scope>
</reference>
<reference key="12">
    <citation type="journal article" date="2001" name="Mol. Cell">
        <title>SOS mutator DNA polymerase IV functions in adaptive mutation and not adaptive amplification.</title>
        <authorList>
            <person name="McKenzie G.J."/>
            <person name="Lee P.L."/>
            <person name="Lombardo M.-J."/>
            <person name="Hastings P.J."/>
            <person name="Rosenberg S.M."/>
        </authorList>
    </citation>
    <scope>FUNCTION</scope>
</reference>
<reference key="13">
    <citation type="journal article" date="2002" name="EMBO Rep.">
        <title>The processivity factor beta controls DNA polymerase IV traffic during spontaneous mutagenesis and translesion synthesis in vivo.</title>
        <authorList>
            <person name="Lenne-Samuel N."/>
            <person name="Wagner J."/>
            <person name="Etienne H."/>
            <person name="Fuchs R.P.P."/>
        </authorList>
    </citation>
    <scope>FUNCTION</scope>
</reference>
<reference key="14">
    <citation type="journal article" date="2002" name="Proc. Natl. Acad. Sci. U.S.A.">
        <title>SOS-induced DNA polymerases enhance long-term survival and evolutionary fitness.</title>
        <authorList>
            <person name="Yeiser B."/>
            <person name="Pepper E.D."/>
            <person name="Goodman M.F."/>
            <person name="Finkel S.E."/>
        </authorList>
    </citation>
    <scope>FUNCTION</scope>
    <source>
        <strain>K12 / W3110 / ATCC 27325 / DSM 5911</strain>
    </source>
</reference>
<reference key="15">
    <citation type="journal article" date="2003" name="J. Bacteriol.">
        <title>The dinB operon and spontaneous mutation in Escherichia coli.</title>
        <authorList>
            <person name="McKenzie G.J."/>
            <person name="Magner D.B."/>
            <person name="Lee P.L."/>
            <person name="Rosenberg S.M."/>
        </authorList>
    </citation>
    <scope>INDUCTION</scope>
    <scope>OPERON STRUCTURE</scope>
    <source>
        <strain>K12 / MG1655 / ATCC 47076</strain>
    </source>
</reference>
<reference key="16">
    <citation type="journal article" date="2005" name="Mol. Cell">
        <title>A sliding-clamp toolbelt binds high- and low-fidelity DNA polymerases simultaneously.</title>
        <authorList>
            <person name="Indiani C."/>
            <person name="McInerney P."/>
            <person name="Georgescu R."/>
            <person name="Goodman M.F."/>
            <person name="O'Donnell M."/>
        </authorList>
    </citation>
    <scope>SUBUNIT</scope>
</reference>
<reference key="17">
    <citation type="journal article" date="2001" name="Cell">
        <title>Error-prone DNA polymerases: novel structures and the benefits of infidelity.</title>
        <authorList>
            <person name="Friedberg E.C."/>
            <person name="Fischhaber P.L."/>
            <person name="Kisker C."/>
        </authorList>
    </citation>
    <scope>REVIEW</scope>
</reference>
<reference key="18">
    <citation type="journal article" date="2001" name="Curr. Opin. Microbiol.">
        <title>Adaptive mutations, mutator DNA polymerases and genetic change strategies of pathogens.</title>
        <authorList>
            <person name="McKenzie G.J."/>
            <person name="Rosenberg S.M."/>
        </authorList>
    </citation>
    <scope>REVIEW</scope>
</reference>
<reference key="19">
    <citation type="journal article" date="2009" name="Mol. Cell">
        <title>Hydroxyurea induces hydroxyl radical-mediated cell death in Escherichia coli.</title>
        <authorList>
            <person name="Davies B.W."/>
            <person name="Kohanski M.A."/>
            <person name="Simmons L.A."/>
            <person name="Winkler J.A."/>
            <person name="Collins J.J."/>
            <person name="Walker G.C."/>
        </authorList>
    </citation>
    <scope>INDUCTION BY HYDROXYUREA</scope>
    <source>
        <strain>K12 / MC4100 / ATCC 35695 / DSM 6574</strain>
    </source>
</reference>
<reference key="20">
    <citation type="journal article" date="2002" name="Annu. Rev. Biochem.">
        <title>Error-prone repair DNA polymerases in prokaryotes and eukaryotes.</title>
        <authorList>
            <person name="Goodman M.F."/>
        </authorList>
    </citation>
    <scope>REVIEW</scope>
</reference>
<reference evidence="18" key="21">
    <citation type="journal article" date="2003" name="EMBO J.">
        <title>Structural basis for recruitment of translesion DNA polymerase Pol IV/DinB to the beta-clamp.</title>
        <authorList>
            <person name="Bunting K.A."/>
            <person name="Roe S.M."/>
            <person name="Pearl L.H."/>
        </authorList>
    </citation>
    <scope>X-RAY CRYSTALLOGRAPHY (1.9 ANGSTROMS) OF 243-351 IN COMPLEX WITH DNAN</scope>
</reference>
<reference evidence="17" key="22">
    <citation type="journal article" date="2004" name="J. Mol. Biol.">
        <title>Structural and biochemical analysis of sliding clamp/ligand interactions suggest a competition between replicative and translesion DNA polymerases.</title>
        <authorList>
            <person name="Burnouf D.Y."/>
            <person name="Olieric V."/>
            <person name="Wagner J."/>
            <person name="Fujii S."/>
            <person name="Reinbolt J."/>
            <person name="Fuchs R.P."/>
            <person name="Dumas P."/>
        </authorList>
    </citation>
    <scope>X-RAY CRYSTALLOGRAPHY (1.65 ANGSTROMS) OF 336-351 IN COMPLEX WITH DNAN</scope>
</reference>
<dbReference type="EC" id="2.7.7.7"/>
<dbReference type="EMBL" id="D38582">
    <property type="protein sequence ID" value="BAA07593.1"/>
    <property type="molecule type" value="Genomic_DNA"/>
</dbReference>
<dbReference type="EMBL" id="U70214">
    <property type="protein sequence ID" value="AAB08651.1"/>
    <property type="molecule type" value="Genomic_DNA"/>
</dbReference>
<dbReference type="EMBL" id="U00096">
    <property type="protein sequence ID" value="AAC73335.1"/>
    <property type="molecule type" value="Genomic_DNA"/>
</dbReference>
<dbReference type="EMBL" id="AP009048">
    <property type="protein sequence ID" value="BAA77901.1"/>
    <property type="molecule type" value="Genomic_DNA"/>
</dbReference>
<dbReference type="EMBL" id="AF483080">
    <property type="protein sequence ID" value="AAL91943.1"/>
    <property type="molecule type" value="Genomic_DNA"/>
</dbReference>
<dbReference type="EMBL" id="AF483081">
    <property type="protein sequence ID" value="AAL91944.1"/>
    <property type="molecule type" value="Genomic_DNA"/>
</dbReference>
<dbReference type="EMBL" id="AF483082">
    <property type="protein sequence ID" value="AAL91945.1"/>
    <property type="molecule type" value="Genomic_DNA"/>
</dbReference>
<dbReference type="EMBL" id="AF483083">
    <property type="protein sequence ID" value="AAL91946.1"/>
    <property type="molecule type" value="Genomic_DNA"/>
</dbReference>
<dbReference type="EMBL" id="AF483084">
    <property type="protein sequence ID" value="AAL91947.1"/>
    <property type="molecule type" value="Genomic_DNA"/>
</dbReference>
<dbReference type="EMBL" id="AF483085">
    <property type="protein sequence ID" value="AAL91948.1"/>
    <property type="molecule type" value="Genomic_DNA"/>
</dbReference>
<dbReference type="EMBL" id="AF483086">
    <property type="protein sequence ID" value="AAL91949.1"/>
    <property type="molecule type" value="Genomic_DNA"/>
</dbReference>
<dbReference type="EMBL" id="AF483087">
    <property type="protein sequence ID" value="AAL91950.1"/>
    <property type="molecule type" value="Genomic_DNA"/>
</dbReference>
<dbReference type="EMBL" id="AF483088">
    <property type="protein sequence ID" value="AAL91951.1"/>
    <property type="molecule type" value="Genomic_DNA"/>
</dbReference>
<dbReference type="EMBL" id="AF483089">
    <property type="protein sequence ID" value="AAL91952.1"/>
    <property type="molecule type" value="Genomic_DNA"/>
</dbReference>
<dbReference type="EMBL" id="AF483090">
    <property type="protein sequence ID" value="AAL91953.1"/>
    <property type="molecule type" value="Genomic_DNA"/>
</dbReference>
<dbReference type="EMBL" id="AF483091">
    <property type="protein sequence ID" value="AAL91954.1"/>
    <property type="molecule type" value="Genomic_DNA"/>
</dbReference>
<dbReference type="EMBL" id="AF483092">
    <property type="protein sequence ID" value="AAL91955.1"/>
    <property type="molecule type" value="Genomic_DNA"/>
</dbReference>
<dbReference type="EMBL" id="AF483093">
    <property type="protein sequence ID" value="AAL91956.1"/>
    <property type="molecule type" value="Genomic_DNA"/>
</dbReference>
<dbReference type="EMBL" id="AF483094">
    <property type="protein sequence ID" value="AAL91957.1"/>
    <property type="molecule type" value="Genomic_DNA"/>
</dbReference>
<dbReference type="EMBL" id="AF483095">
    <property type="protein sequence ID" value="AAL91958.1"/>
    <property type="molecule type" value="Genomic_DNA"/>
</dbReference>
<dbReference type="EMBL" id="AF483096">
    <property type="protein sequence ID" value="AAL91959.1"/>
    <property type="molecule type" value="Genomic_DNA"/>
</dbReference>
<dbReference type="EMBL" id="AF483097">
    <property type="protein sequence ID" value="AAL91960.1"/>
    <property type="molecule type" value="Genomic_DNA"/>
</dbReference>
<dbReference type="EMBL" id="AF483098">
    <property type="protein sequence ID" value="AAL91961.1"/>
    <property type="molecule type" value="Genomic_DNA"/>
</dbReference>
<dbReference type="EMBL" id="AF483099">
    <property type="protein sequence ID" value="AAL91962.1"/>
    <property type="molecule type" value="Genomic_DNA"/>
</dbReference>
<dbReference type="EMBL" id="AF483100">
    <property type="protein sequence ID" value="AAL91963.1"/>
    <property type="molecule type" value="Genomic_DNA"/>
</dbReference>
<dbReference type="EMBL" id="AF483101">
    <property type="protein sequence ID" value="AAL91964.1"/>
    <property type="molecule type" value="Genomic_DNA"/>
</dbReference>
<dbReference type="EMBL" id="AF483102">
    <property type="protein sequence ID" value="AAL91965.1"/>
    <property type="molecule type" value="Genomic_DNA"/>
</dbReference>
<dbReference type="EMBL" id="AF483103">
    <property type="protein sequence ID" value="AAL91966.1"/>
    <property type="molecule type" value="Genomic_DNA"/>
</dbReference>
<dbReference type="EMBL" id="AF483104">
    <property type="protein sequence ID" value="AAL91967.1"/>
    <property type="molecule type" value="Genomic_DNA"/>
</dbReference>
<dbReference type="EMBL" id="AF483105">
    <property type="protein sequence ID" value="AAL91968.1"/>
    <property type="molecule type" value="Genomic_DNA"/>
</dbReference>
<dbReference type="PIR" id="H64747">
    <property type="entry name" value="H64747"/>
</dbReference>
<dbReference type="RefSeq" id="NP_414766.1">
    <property type="nucleotide sequence ID" value="NC_000913.3"/>
</dbReference>
<dbReference type="RefSeq" id="WP_001226164.1">
    <property type="nucleotide sequence ID" value="NZ_SSZK01000050.1"/>
</dbReference>
<dbReference type="PDB" id="1OK7">
    <property type="method" value="X-ray"/>
    <property type="resolution" value="1.65 A"/>
    <property type="chains" value="C=336-351"/>
</dbReference>
<dbReference type="PDB" id="1UNN">
    <property type="method" value="X-ray"/>
    <property type="resolution" value="1.90 A"/>
    <property type="chains" value="C/D=243-351"/>
</dbReference>
<dbReference type="PDB" id="4IR1">
    <property type="method" value="X-ray"/>
    <property type="resolution" value="2.38 A"/>
    <property type="chains" value="A/F=2-351"/>
</dbReference>
<dbReference type="PDB" id="4IR9">
    <property type="method" value="X-ray"/>
    <property type="resolution" value="2.33 A"/>
    <property type="chains" value="A/F=2-351"/>
</dbReference>
<dbReference type="PDB" id="4IRC">
    <property type="method" value="X-ray"/>
    <property type="resolution" value="2.67 A"/>
    <property type="chains" value="A/F=2-341"/>
</dbReference>
<dbReference type="PDB" id="4IRD">
    <property type="method" value="X-ray"/>
    <property type="resolution" value="2.48 A"/>
    <property type="chains" value="A/F=2-341"/>
</dbReference>
<dbReference type="PDB" id="4IRK">
    <property type="method" value="X-ray"/>
    <property type="resolution" value="2.32 A"/>
    <property type="chains" value="A/B=2-341"/>
</dbReference>
<dbReference type="PDB" id="4Q43">
    <property type="method" value="X-ray"/>
    <property type="resolution" value="2.45 A"/>
    <property type="chains" value="A/F=2-351"/>
</dbReference>
<dbReference type="PDB" id="4Q44">
    <property type="method" value="X-ray"/>
    <property type="resolution" value="2.71 A"/>
    <property type="chains" value="A/F=2-341"/>
</dbReference>
<dbReference type="PDB" id="4Q45">
    <property type="method" value="X-ray"/>
    <property type="resolution" value="2.18 A"/>
    <property type="chains" value="A/F=2-341"/>
</dbReference>
<dbReference type="PDB" id="4R8U">
    <property type="method" value="X-ray"/>
    <property type="resolution" value="2.30 A"/>
    <property type="chains" value="A=2-340, B=2-338"/>
</dbReference>
<dbReference type="PDB" id="5C5J">
    <property type="method" value="X-ray"/>
    <property type="resolution" value="2.10 A"/>
    <property type="chains" value="A/F=2-351"/>
</dbReference>
<dbReference type="PDB" id="5YUR">
    <property type="method" value="X-ray"/>
    <property type="resolution" value="2.04 A"/>
    <property type="chains" value="A/F=2-351"/>
</dbReference>
<dbReference type="PDB" id="5YUS">
    <property type="method" value="X-ray"/>
    <property type="resolution" value="1.94 A"/>
    <property type="chains" value="A/F=2-351"/>
</dbReference>
<dbReference type="PDB" id="5YUT">
    <property type="method" value="X-ray"/>
    <property type="resolution" value="2.15 A"/>
    <property type="chains" value="A/F=2-351"/>
</dbReference>
<dbReference type="PDB" id="5YUU">
    <property type="method" value="X-ray"/>
    <property type="resolution" value="1.89 A"/>
    <property type="chains" value="A/F=2-351"/>
</dbReference>
<dbReference type="PDB" id="5YUV">
    <property type="method" value="X-ray"/>
    <property type="resolution" value="2.06 A"/>
    <property type="chains" value="A/F=2-351"/>
</dbReference>
<dbReference type="PDB" id="5YUW">
    <property type="method" value="X-ray"/>
    <property type="resolution" value="2.12 A"/>
    <property type="chains" value="A/F=2-351"/>
</dbReference>
<dbReference type="PDB" id="5YUX">
    <property type="method" value="X-ray"/>
    <property type="resolution" value="2.04 A"/>
    <property type="chains" value="A/F=2-351"/>
</dbReference>
<dbReference type="PDB" id="5YUY">
    <property type="method" value="X-ray"/>
    <property type="resolution" value="1.74 A"/>
    <property type="chains" value="A/F=2-351"/>
</dbReference>
<dbReference type="PDB" id="5YUZ">
    <property type="method" value="X-ray"/>
    <property type="resolution" value="1.83 A"/>
    <property type="chains" value="A/F=2-351"/>
</dbReference>
<dbReference type="PDB" id="5YV0">
    <property type="method" value="X-ray"/>
    <property type="resolution" value="2.09 A"/>
    <property type="chains" value="A/F=2-351"/>
</dbReference>
<dbReference type="PDB" id="5YV1">
    <property type="method" value="X-ray"/>
    <property type="resolution" value="2.09 A"/>
    <property type="chains" value="A/F=2-351"/>
</dbReference>
<dbReference type="PDB" id="5YV2">
    <property type="method" value="X-ray"/>
    <property type="resolution" value="1.90 A"/>
    <property type="chains" value="A/F=2-351"/>
</dbReference>
<dbReference type="PDB" id="5YV3">
    <property type="method" value="X-ray"/>
    <property type="resolution" value="2.03 A"/>
    <property type="chains" value="A/F=2-351"/>
</dbReference>
<dbReference type="PDB" id="5YYD">
    <property type="method" value="X-ray"/>
    <property type="resolution" value="2.05 A"/>
    <property type="chains" value="A/F=2-351"/>
</dbReference>
<dbReference type="PDB" id="5YYE">
    <property type="method" value="X-ray"/>
    <property type="resolution" value="2.33 A"/>
    <property type="chains" value="A/F=2-351"/>
</dbReference>
<dbReference type="PDB" id="5ZLV">
    <property type="method" value="X-ray"/>
    <property type="resolution" value="2.35 A"/>
    <property type="chains" value="A/F=2-351"/>
</dbReference>
<dbReference type="PDB" id="6IG1">
    <property type="method" value="X-ray"/>
    <property type="resolution" value="1.97 A"/>
    <property type="chains" value="A/F=2-351"/>
</dbReference>
<dbReference type="PDB" id="6JUP">
    <property type="method" value="X-ray"/>
    <property type="resolution" value="2.44 A"/>
    <property type="chains" value="A/F=2-341"/>
</dbReference>
<dbReference type="PDB" id="6JUQ">
    <property type="method" value="X-ray"/>
    <property type="resolution" value="2.74 A"/>
    <property type="chains" value="A/F=2-341"/>
</dbReference>
<dbReference type="PDBsum" id="1OK7"/>
<dbReference type="PDBsum" id="1UNN"/>
<dbReference type="PDBsum" id="4IR1"/>
<dbReference type="PDBsum" id="4IR9"/>
<dbReference type="PDBsum" id="4IRC"/>
<dbReference type="PDBsum" id="4IRD"/>
<dbReference type="PDBsum" id="4IRK"/>
<dbReference type="PDBsum" id="4Q43"/>
<dbReference type="PDBsum" id="4Q44"/>
<dbReference type="PDBsum" id="4Q45"/>
<dbReference type="PDBsum" id="4R8U"/>
<dbReference type="PDBsum" id="5C5J"/>
<dbReference type="PDBsum" id="5YUR"/>
<dbReference type="PDBsum" id="5YUS"/>
<dbReference type="PDBsum" id="5YUT"/>
<dbReference type="PDBsum" id="5YUU"/>
<dbReference type="PDBsum" id="5YUV"/>
<dbReference type="PDBsum" id="5YUW"/>
<dbReference type="PDBsum" id="5YUX"/>
<dbReference type="PDBsum" id="5YUY"/>
<dbReference type="PDBsum" id="5YUZ"/>
<dbReference type="PDBsum" id="5YV0"/>
<dbReference type="PDBsum" id="5YV1"/>
<dbReference type="PDBsum" id="5YV2"/>
<dbReference type="PDBsum" id="5YV3"/>
<dbReference type="PDBsum" id="5YYD"/>
<dbReference type="PDBsum" id="5YYE"/>
<dbReference type="PDBsum" id="5ZLV"/>
<dbReference type="PDBsum" id="6IG1"/>
<dbReference type="PDBsum" id="6JUP"/>
<dbReference type="PDBsum" id="6JUQ"/>
<dbReference type="SMR" id="Q47155"/>
<dbReference type="BioGRID" id="4261678">
    <property type="interactions" value="62"/>
</dbReference>
<dbReference type="FunCoup" id="Q47155">
    <property type="interactions" value="650"/>
</dbReference>
<dbReference type="IntAct" id="Q47155">
    <property type="interactions" value="3"/>
</dbReference>
<dbReference type="MINT" id="Q47155"/>
<dbReference type="STRING" id="511145.b0231"/>
<dbReference type="PaxDb" id="511145-b0231"/>
<dbReference type="EnsemblBacteria" id="AAC73335">
    <property type="protein sequence ID" value="AAC73335"/>
    <property type="gene ID" value="b0231"/>
</dbReference>
<dbReference type="GeneID" id="93777162"/>
<dbReference type="GeneID" id="944922"/>
<dbReference type="KEGG" id="ecj:JW0221"/>
<dbReference type="KEGG" id="eco:b0231"/>
<dbReference type="KEGG" id="ecoc:C3026_01095"/>
<dbReference type="KEGG" id="ecoc:C3026_23835"/>
<dbReference type="PATRIC" id="fig|1411691.4.peg.2052"/>
<dbReference type="EchoBASE" id="EB2935"/>
<dbReference type="eggNOG" id="COG0389">
    <property type="taxonomic scope" value="Bacteria"/>
</dbReference>
<dbReference type="HOGENOM" id="CLU_012348_1_2_6"/>
<dbReference type="InParanoid" id="Q47155"/>
<dbReference type="OMA" id="TRCKPDG"/>
<dbReference type="OrthoDB" id="9808813at2"/>
<dbReference type="PhylomeDB" id="Q47155"/>
<dbReference type="BioCyc" id="EcoCyc:G6115-MONOMER"/>
<dbReference type="BioCyc" id="MetaCyc:G6115-MONOMER"/>
<dbReference type="EvolutionaryTrace" id="Q47155"/>
<dbReference type="PRO" id="PR:Q47155"/>
<dbReference type="Proteomes" id="UP000000625">
    <property type="component" value="Chromosome"/>
</dbReference>
<dbReference type="GO" id="GO:0005737">
    <property type="term" value="C:cytoplasm"/>
    <property type="evidence" value="ECO:0000314"/>
    <property type="project" value="EcoliWiki"/>
</dbReference>
<dbReference type="GO" id="GO:0003684">
    <property type="term" value="F:damaged DNA binding"/>
    <property type="evidence" value="ECO:0007669"/>
    <property type="project" value="InterPro"/>
</dbReference>
<dbReference type="GO" id="GO:0003887">
    <property type="term" value="F:DNA-directed DNA polymerase activity"/>
    <property type="evidence" value="ECO:0000314"/>
    <property type="project" value="EcoCyc"/>
</dbReference>
<dbReference type="GO" id="GO:0000287">
    <property type="term" value="F:magnesium ion binding"/>
    <property type="evidence" value="ECO:0000314"/>
    <property type="project" value="EcoCyc"/>
</dbReference>
<dbReference type="GO" id="GO:0006974">
    <property type="term" value="P:DNA damage response"/>
    <property type="evidence" value="ECO:0000270"/>
    <property type="project" value="EcoCyc"/>
</dbReference>
<dbReference type="GO" id="GO:0000731">
    <property type="term" value="P:DNA synthesis involved in DNA repair"/>
    <property type="evidence" value="ECO:0000314"/>
    <property type="project" value="EcoliWiki"/>
</dbReference>
<dbReference type="GO" id="GO:0006261">
    <property type="term" value="P:DNA-templated DNA replication"/>
    <property type="evidence" value="ECO:0007669"/>
    <property type="project" value="UniProtKB-UniRule"/>
</dbReference>
<dbReference type="GO" id="GO:0070987">
    <property type="term" value="P:error-free translesion synthesis"/>
    <property type="evidence" value="ECO:0000314"/>
    <property type="project" value="EcoCyc"/>
</dbReference>
<dbReference type="GO" id="GO:0042276">
    <property type="term" value="P:error-prone translesion synthesis"/>
    <property type="evidence" value="ECO:0000315"/>
    <property type="project" value="EcoCyc"/>
</dbReference>
<dbReference type="GO" id="GO:0009432">
    <property type="term" value="P:SOS response"/>
    <property type="evidence" value="ECO:0000270"/>
    <property type="project" value="EcoCyc"/>
</dbReference>
<dbReference type="CDD" id="cd03586">
    <property type="entry name" value="PolY_Pol_IV_kappa"/>
    <property type="match status" value="1"/>
</dbReference>
<dbReference type="FunFam" id="1.10.150.20:FF:000019">
    <property type="entry name" value="DNA polymerase IV"/>
    <property type="match status" value="1"/>
</dbReference>
<dbReference type="FunFam" id="3.30.1490.100:FF:000002">
    <property type="entry name" value="DNA polymerase IV"/>
    <property type="match status" value="1"/>
</dbReference>
<dbReference type="FunFam" id="3.30.70.270:FF:000002">
    <property type="entry name" value="DNA polymerase IV"/>
    <property type="match status" value="1"/>
</dbReference>
<dbReference type="FunFam" id="3.40.1170.60:FF:000001">
    <property type="entry name" value="DNA polymerase IV"/>
    <property type="match status" value="1"/>
</dbReference>
<dbReference type="Gene3D" id="3.30.70.270">
    <property type="match status" value="1"/>
</dbReference>
<dbReference type="Gene3D" id="3.40.1170.60">
    <property type="match status" value="1"/>
</dbReference>
<dbReference type="Gene3D" id="1.10.150.20">
    <property type="entry name" value="5' to 3' exonuclease, C-terminal subdomain"/>
    <property type="match status" value="1"/>
</dbReference>
<dbReference type="Gene3D" id="3.30.1490.100">
    <property type="entry name" value="DNA polymerase, Y-family, little finger domain"/>
    <property type="match status" value="1"/>
</dbReference>
<dbReference type="HAMAP" id="MF_01113">
    <property type="entry name" value="DNApol_IV"/>
    <property type="match status" value="1"/>
</dbReference>
<dbReference type="InterPro" id="IPR043502">
    <property type="entry name" value="DNA/RNA_pol_sf"/>
</dbReference>
<dbReference type="InterPro" id="IPR036775">
    <property type="entry name" value="DNA_pol_Y-fam_lit_finger_sf"/>
</dbReference>
<dbReference type="InterPro" id="IPR017961">
    <property type="entry name" value="DNA_pol_Y-fam_little_finger"/>
</dbReference>
<dbReference type="InterPro" id="IPR050116">
    <property type="entry name" value="DNA_polymerase-Y"/>
</dbReference>
<dbReference type="InterPro" id="IPR022880">
    <property type="entry name" value="DNApol_IV"/>
</dbReference>
<dbReference type="InterPro" id="IPR053848">
    <property type="entry name" value="IMS_HHH_1"/>
</dbReference>
<dbReference type="InterPro" id="IPR043128">
    <property type="entry name" value="Rev_trsase/Diguanyl_cyclase"/>
</dbReference>
<dbReference type="InterPro" id="IPR001126">
    <property type="entry name" value="UmuC"/>
</dbReference>
<dbReference type="NCBIfam" id="NF002677">
    <property type="entry name" value="PRK02406.1"/>
    <property type="match status" value="1"/>
</dbReference>
<dbReference type="PANTHER" id="PTHR11076:SF33">
    <property type="entry name" value="DNA POLYMERASE KAPPA"/>
    <property type="match status" value="1"/>
</dbReference>
<dbReference type="PANTHER" id="PTHR11076">
    <property type="entry name" value="DNA REPAIR POLYMERASE UMUC / TRANSFERASE FAMILY MEMBER"/>
    <property type="match status" value="1"/>
</dbReference>
<dbReference type="Pfam" id="PF00817">
    <property type="entry name" value="IMS"/>
    <property type="match status" value="1"/>
</dbReference>
<dbReference type="Pfam" id="PF11799">
    <property type="entry name" value="IMS_C"/>
    <property type="match status" value="1"/>
</dbReference>
<dbReference type="Pfam" id="PF21999">
    <property type="entry name" value="IMS_HHH_1"/>
    <property type="match status" value="1"/>
</dbReference>
<dbReference type="SUPFAM" id="SSF56672">
    <property type="entry name" value="DNA/RNA polymerases"/>
    <property type="match status" value="1"/>
</dbReference>
<dbReference type="SUPFAM" id="SSF100879">
    <property type="entry name" value="Lesion bypass DNA polymerase (Y-family), little finger domain"/>
    <property type="match status" value="1"/>
</dbReference>
<dbReference type="PROSITE" id="PS50173">
    <property type="entry name" value="UMUC"/>
    <property type="match status" value="1"/>
</dbReference>
<gene>
    <name type="primary">dinB</name>
    <name type="synonym">dinP</name>
    <name type="ordered locus">b0231</name>
    <name type="ordered locus">JW0221</name>
</gene>
<name>DPO4_ECOLI</name>
<sequence>MRKIIHVDMDCFFAAVEMRDNPALRDIPIAIGGSRERRGVISTANYPARKFGVRSAMPTGMALKLCPHLTLLPGRFDAYKEASNHIREIFSRYTSRIEPLSLDEAYLDVTDSVHCHGSATLIAQEIRQTIFNELQLTASAGVAPVKFLAKIASDMNKPNGQFVITPAEVPAFLQTLPLAKIPGVGKVSAAKLEAMGLRTCGDVQKCDLVMLLKRFGKFGRILWERSQGIDERDVNSERLRKSVGVERTMAEDIHHWSECEAIIERLYPELERRLAKVKPDLLIARQGVKLKFDDFQQTTQEHVWPRLNKADLIATARKTWDERRGGRGVRLVGLHVTLLDPQMERQLVLGL</sequence>
<keyword id="KW-0002">3D-structure</keyword>
<keyword id="KW-0963">Cytoplasm</keyword>
<keyword id="KW-0227">DNA damage</keyword>
<keyword id="KW-0234">DNA repair</keyword>
<keyword id="KW-0235">DNA replication</keyword>
<keyword id="KW-0238">DNA-binding</keyword>
<keyword id="KW-0239">DNA-directed DNA polymerase</keyword>
<keyword id="KW-0460">Magnesium</keyword>
<keyword id="KW-0479">Metal-binding</keyword>
<keyword id="KW-0515">Mutator protein</keyword>
<keyword id="KW-0548">Nucleotidyltransferase</keyword>
<keyword id="KW-1185">Reference proteome</keyword>
<keyword id="KW-0808">Transferase</keyword>
<accession>Q47155</accession>
<accession>Q47683</accession>
<accession>Q8RJ78</accession>
<accession>Q8RJ81</accession>
<accession>Q8RJ86</accession>
<accession>Q8RJ87</accession>
<accession>Q8RNI5</accession>
<accession>Q8RNI6</accession>
<accession>Q8RNI7</accession>
<accession>Q8RNI8</accession>
<accession>Q8RNI9</accession>
<accession>Q8RNJ0</accession>
<accession>Q8RNJ1</accession>
<accession>Q8RNJ2</accession>
<accession>Q8RNJ3</accession>
<accession>Q8RNJ4</accession>
<accession>Q8RNJ5</accession>
<feature type="chain" id="PRO_0000173912" description="DNA polymerase IV">
    <location>
        <begin position="1"/>
        <end position="351"/>
    </location>
</feature>
<feature type="domain" description="UmuC">
    <location>
        <begin position="4"/>
        <end position="185"/>
    </location>
</feature>
<feature type="active site" evidence="1">
    <location>
        <position position="104"/>
    </location>
</feature>
<feature type="binding site" evidence="1">
    <location>
        <position position="8"/>
    </location>
    <ligand>
        <name>Mg(2+)</name>
        <dbReference type="ChEBI" id="CHEBI:18420"/>
    </ligand>
</feature>
<feature type="binding site" evidence="1">
    <location>
        <position position="103"/>
    </location>
    <ligand>
        <name>Mg(2+)</name>
        <dbReference type="ChEBI" id="CHEBI:18420"/>
    </ligand>
</feature>
<feature type="site" description="Substrate discrimination" evidence="1">
    <location>
        <position position="13"/>
    </location>
</feature>
<feature type="sequence variant" description="In strain: ECOR 45B1.">
    <original>ERR</original>
    <variation>ARG</variation>
    <location>
        <begin position="36"/>
        <end position="38"/>
    </location>
</feature>
<feature type="sequence variant" description="In strain: ECOR 35D.">
    <original>Q</original>
    <variation>K</variation>
    <location>
        <position position="124"/>
    </location>
</feature>
<feature type="sequence variant" description="In strain: ECOR 34B1 and ECOR 37UG.">
    <original>N</original>
    <variation>S</variation>
    <location>
        <position position="132"/>
    </location>
</feature>
<feature type="sequence variant" description="In strain: ECOR 70B1.">
    <original>Q</original>
    <variation>H</variation>
    <location>
        <position position="135"/>
    </location>
</feature>
<feature type="sequence variant" description="In strain: ECOR 37UG.">
    <original>P</original>
    <variation>S</variation>
    <location>
        <position position="170"/>
    </location>
</feature>
<feature type="sequence variant" description="In strain: ECOR 45B1, ECOR 46D, ECOR 49D and ECOR 50D.">
    <original>A</original>
    <variation>T</variation>
    <location>
        <position position="171"/>
    </location>
</feature>
<feature type="sequence variant" description="In strain: ECOR 37UG.">
    <original>L</original>
    <variation>F</variation>
    <location>
        <position position="176"/>
    </location>
</feature>
<feature type="sequence variant" description="In strain: ECOR 59B2.">
    <original>G</original>
    <variation>S</variation>
    <location>
        <position position="201"/>
    </location>
</feature>
<feature type="sequence variant" description="In strain: ECOR 37UG, ECOR 45B1, ECOR 51B2, ECOR 52B2, ECOR 58B1 and ECOR 70B1.">
    <original>M</original>
    <variation>I</variation>
    <location>
        <position position="210"/>
    </location>
</feature>
<feature type="sequence variant" description="In strain: ECOR 35D, ECOR 46D, ECOR 49D, ECOR 50D, ECOR 57B2, ECOR 59B2, ECOR 60B2 and ECOR 62B2.">
    <original>M</original>
    <variation>T</variation>
    <location>
        <position position="210"/>
    </location>
</feature>
<feature type="sequence variant" description="In strain: ECOR 59B2 and ECOR 60B2.">
    <original>R</original>
    <variation>C</variation>
    <location>
        <position position="225"/>
    </location>
</feature>
<feature type="sequence variant" description="In strain: ECOR 57B2, ECOR 59B2, ECOR 60B2 and ECOR 62B2.">
    <original>A</original>
    <variation>S</variation>
    <location>
        <position position="310"/>
    </location>
</feature>
<feature type="sequence variant" description="In strain: ECOR 35D.">
    <original>D</original>
    <variation>N</variation>
    <location>
        <position position="321"/>
    </location>
</feature>
<feature type="mutagenesis site" description="Loss of function." evidence="2">
    <original>D</original>
    <variation>A</variation>
    <variation>H</variation>
    <location>
        <position position="8"/>
    </location>
</feature>
<feature type="mutagenesis site" description="Loss of function." evidence="2">
    <original>R</original>
    <variation>A</variation>
    <variation>F</variation>
    <location>
        <position position="49"/>
    </location>
</feature>
<feature type="mutagenesis site" description="Loss of function." evidence="2">
    <original>D</original>
    <variation>A</variation>
    <variation>N</variation>
    <location>
        <position position="103"/>
    </location>
</feature>
<feature type="mutagenesis site" description="Loss of function." evidence="2">
    <original>E</original>
    <variation>A</variation>
    <location>
        <position position="104"/>
    </location>
</feature>
<feature type="strand" evidence="19">
    <location>
        <begin position="4"/>
        <end position="9"/>
    </location>
</feature>
<feature type="helix" evidence="19">
    <location>
        <begin position="12"/>
        <end position="20"/>
    </location>
</feature>
<feature type="helix" evidence="19">
    <location>
        <begin position="22"/>
        <end position="24"/>
    </location>
</feature>
<feature type="strand" evidence="19">
    <location>
        <begin position="25"/>
        <end position="27"/>
    </location>
</feature>
<feature type="strand" evidence="19">
    <location>
        <begin position="29"/>
        <end position="32"/>
    </location>
</feature>
<feature type="turn" evidence="19">
    <location>
        <begin position="35"/>
        <end position="38"/>
    </location>
</feature>
<feature type="strand" evidence="19">
    <location>
        <begin position="40"/>
        <end position="44"/>
    </location>
</feature>
<feature type="helix" evidence="19">
    <location>
        <begin position="46"/>
        <end position="49"/>
    </location>
</feature>
<feature type="turn" evidence="19">
    <location>
        <begin position="50"/>
        <end position="52"/>
    </location>
</feature>
<feature type="helix" evidence="19">
    <location>
        <begin position="59"/>
        <end position="65"/>
    </location>
</feature>
<feature type="strand" evidence="19">
    <location>
        <begin position="70"/>
        <end position="72"/>
    </location>
</feature>
<feature type="helix" evidence="19">
    <location>
        <begin position="76"/>
        <end position="91"/>
    </location>
</feature>
<feature type="strand" evidence="19">
    <location>
        <begin position="97"/>
        <end position="101"/>
    </location>
</feature>
<feature type="strand" evidence="19">
    <location>
        <begin position="104"/>
        <end position="108"/>
    </location>
</feature>
<feature type="helix" evidence="19">
    <location>
        <begin position="114"/>
        <end position="117"/>
    </location>
</feature>
<feature type="helix" evidence="19">
    <location>
        <begin position="119"/>
        <end position="134"/>
    </location>
</feature>
<feature type="strand" evidence="19">
    <location>
        <begin position="138"/>
        <end position="145"/>
    </location>
</feature>
<feature type="helix" evidence="19">
    <location>
        <begin position="146"/>
        <end position="155"/>
    </location>
</feature>
<feature type="strand" evidence="19">
    <location>
        <begin position="161"/>
        <end position="163"/>
    </location>
</feature>
<feature type="helix" evidence="19">
    <location>
        <begin position="166"/>
        <end position="168"/>
    </location>
</feature>
<feature type="helix" evidence="19">
    <location>
        <begin position="169"/>
        <end position="174"/>
    </location>
</feature>
<feature type="helix" evidence="19">
    <location>
        <begin position="178"/>
        <end position="180"/>
    </location>
</feature>
<feature type="helix" evidence="19">
    <location>
        <begin position="186"/>
        <end position="194"/>
    </location>
</feature>
<feature type="helix" evidence="19">
    <location>
        <begin position="200"/>
        <end position="204"/>
    </location>
</feature>
<feature type="helix" evidence="19">
    <location>
        <begin position="208"/>
        <end position="215"/>
    </location>
</feature>
<feature type="helix" evidence="19">
    <location>
        <begin position="217"/>
        <end position="225"/>
    </location>
</feature>
<feature type="turn" evidence="19">
    <location>
        <begin position="226"/>
        <end position="228"/>
    </location>
</feature>
<feature type="strand" evidence="19">
    <location>
        <begin position="242"/>
        <end position="253"/>
    </location>
</feature>
<feature type="helix" evidence="19">
    <location>
        <begin position="256"/>
        <end position="277"/>
    </location>
</feature>
<feature type="strand" evidence="19">
    <location>
        <begin position="284"/>
        <end position="292"/>
    </location>
</feature>
<feature type="strand" evidence="19">
    <location>
        <begin position="297"/>
        <end position="303"/>
    </location>
</feature>
<feature type="helix" evidence="19">
    <location>
        <begin position="309"/>
        <end position="323"/>
    </location>
</feature>
<feature type="strand" evidence="19">
    <location>
        <begin position="329"/>
        <end position="337"/>
    </location>
</feature>
<proteinExistence type="evidence at protein level"/>
<organism>
    <name type="scientific">Escherichia coli (strain K12)</name>
    <dbReference type="NCBI Taxonomy" id="83333"/>
    <lineage>
        <taxon>Bacteria</taxon>
        <taxon>Pseudomonadati</taxon>
        <taxon>Pseudomonadota</taxon>
        <taxon>Gammaproteobacteria</taxon>
        <taxon>Enterobacterales</taxon>
        <taxon>Enterobacteriaceae</taxon>
        <taxon>Escherichia</taxon>
    </lineage>
</organism>
<comment type="function">
    <text evidence="2 3 4 5 6 7 9 11 13 16">Poorly processive, error-prone DNA polymerase involved in translesion repair and untargeted mutagenesis (PubMed:10488344, PubMed:10801133). Copies undamaged DNA at stalled replication forks, which arise in vivo from mismatched or misaligned primer ends. These misaligned primers can be extended by Pol IV. Exhibits no 3'-5' exonuclease (proofreading) activity (PubMed:10488344). Overexpression of Pol IV results in increased frameshift mutagenesis. It is required for stationary-phase adaptive mutation, which provides the bacterium with flexibility in dealing with environmental stress, enhancing long-term survival and evolutionary fitness. Not seen to be involved in translesion snythesis even when stimulated by the beta slding-clamp and clamp-loading complex, which do however increase non-targeted DNA polymerase efficiency 3,000-fold, may be due to targeting to stalled replication forks on nondamaged DNA (PubMed:10801133, PubMed:16168375). Involved in translesional synthesis, in conjunction with the beta clamp from PolIII (PubMed:14592985, PubMed:14729336).</text>
</comment>
<comment type="catalytic activity">
    <reaction>
        <text>DNA(n) + a 2'-deoxyribonucleoside 5'-triphosphate = DNA(n+1) + diphosphate</text>
        <dbReference type="Rhea" id="RHEA:22508"/>
        <dbReference type="Rhea" id="RHEA-COMP:17339"/>
        <dbReference type="Rhea" id="RHEA-COMP:17340"/>
        <dbReference type="ChEBI" id="CHEBI:33019"/>
        <dbReference type="ChEBI" id="CHEBI:61560"/>
        <dbReference type="ChEBI" id="CHEBI:173112"/>
        <dbReference type="EC" id="2.7.7.7"/>
    </reaction>
</comment>
<comment type="cofactor">
    <cofactor evidence="1">
        <name>Mg(2+)</name>
        <dbReference type="ChEBI" id="CHEBI:18420"/>
    </cofactor>
    <text evidence="1">Binds 2 magnesium ions per subunit.</text>
</comment>
<comment type="subunit">
    <text evidence="9 10 11 15">Monomer. Interacts with beta sliding clamp, which confers increased processivity (PubMed:14592985, PubMed:14729336, PubMed:16168375).</text>
</comment>
<comment type="interaction">
    <interactant intactId="EBI-1037359">
        <id>Q47155</id>
    </interactant>
    <interactant intactId="EBI-542385">
        <id>P0A988</id>
        <label>dnaN</label>
    </interactant>
    <organismsDiffer>false</organismsDiffer>
    <experiments>2</experiments>
</comment>
<comment type="interaction">
    <interactant intactId="EBI-1037359">
        <id>Q47155</id>
    </interactant>
    <interactant intactId="EBI-551571">
        <id>P0AFF6</id>
        <label>nusA</label>
    </interactant>
    <organismsDiffer>false</organismsDiffer>
    <experiments>3</experiments>
</comment>
<comment type="subcellular location">
    <subcellularLocation>
        <location evidence="15">Cytoplasm</location>
    </subcellularLocation>
</comment>
<comment type="induction">
    <text evidence="8 12">By SOS response. A member of the dinB-yafNOP operon (PubMed:12813093). Induced by hydroxyurea (PubMed:20005847).</text>
</comment>
<comment type="domain">
    <text evidence="1">The catalytic core consists of fingers, palm and thumb subdomains, but the fingers and thumb subdomains are much smaller than in high-fidelity polymerases; residues from five sequence motifs of the Y-family cluster around an active site cleft that can accommodate DNA and nucleotide substrates with relaxed geometric constraints, with consequently higher rates of misincorporation and low processivity. It lacks the O helices present in high-fidelity DNA polymerases in the fingers domain (By similarity).</text>
</comment>
<comment type="similarity">
    <text evidence="15">Belongs to the DNA polymerase type-Y family.</text>
</comment>
<evidence type="ECO:0000250" key="1"/>
<evidence type="ECO:0000269" key="2">
    <source>
    </source>
</evidence>
<evidence type="ECO:0000269" key="3">
    <source>
    </source>
</evidence>
<evidence type="ECO:0000269" key="4">
    <source>
    </source>
</evidence>
<evidence type="ECO:0000269" key="5">
    <source>
    </source>
</evidence>
<evidence type="ECO:0000269" key="6">
    <source>
    </source>
</evidence>
<evidence type="ECO:0000269" key="7">
    <source>
    </source>
</evidence>
<evidence type="ECO:0000269" key="8">
    <source>
    </source>
</evidence>
<evidence type="ECO:0000269" key="9">
    <source>
    </source>
</evidence>
<evidence type="ECO:0000269" key="10">
    <source>
    </source>
</evidence>
<evidence type="ECO:0000269" key="11">
    <source>
    </source>
</evidence>
<evidence type="ECO:0000269" key="12">
    <source>
    </source>
</evidence>
<evidence type="ECO:0000269" key="13">
    <source>
    </source>
</evidence>
<evidence type="ECO:0000303" key="14">
    <source>
    </source>
</evidence>
<evidence type="ECO:0000305" key="15"/>
<evidence type="ECO:0000305" key="16">
    <source>
    </source>
</evidence>
<evidence type="ECO:0007744" key="17">
    <source>
        <dbReference type="PDB" id="1OK7"/>
    </source>
</evidence>
<evidence type="ECO:0007744" key="18">
    <source>
        <dbReference type="PDB" id="1UNN"/>
    </source>
</evidence>
<evidence type="ECO:0007829" key="19">
    <source>
        <dbReference type="PDB" id="5YUY"/>
    </source>
</evidence>
<protein>
    <recommendedName>
        <fullName>DNA polymerase IV</fullName>
        <shortName>Pol IV</shortName>
        <ecNumber>2.7.7.7</ecNumber>
    </recommendedName>
    <alternativeName>
        <fullName evidence="14">Translesion synthesis polymerase IV</fullName>
        <shortName>TSL polymerase IV</shortName>
    </alternativeName>
</protein>